<proteinExistence type="inferred from homology"/>
<comment type="function">
    <text evidence="1">Catalyzes the transamination of N(2)-succinylornithine and alpha-ketoglutarate into N(2)-succinylglutamate semialdehyde and glutamate. Can also act as an acetylornithine aminotransferase.</text>
</comment>
<comment type="catalytic activity">
    <reaction evidence="1">
        <text>N(2)-succinyl-L-ornithine + 2-oxoglutarate = N-succinyl-L-glutamate 5-semialdehyde + L-glutamate</text>
        <dbReference type="Rhea" id="RHEA:16953"/>
        <dbReference type="ChEBI" id="CHEBI:16810"/>
        <dbReference type="ChEBI" id="CHEBI:29985"/>
        <dbReference type="ChEBI" id="CHEBI:58514"/>
        <dbReference type="ChEBI" id="CHEBI:58520"/>
        <dbReference type="EC" id="2.6.1.81"/>
    </reaction>
</comment>
<comment type="cofactor">
    <cofactor evidence="1">
        <name>pyridoxal 5'-phosphate</name>
        <dbReference type="ChEBI" id="CHEBI:597326"/>
    </cofactor>
</comment>
<comment type="pathway">
    <text evidence="1">Amino-acid degradation; L-arginine degradation via AST pathway; L-glutamate and succinate from L-arginine: step 3/5.</text>
</comment>
<comment type="similarity">
    <text evidence="1">Belongs to the class-III pyridoxal-phosphate-dependent aminotransferase family. AstC subfamily.</text>
</comment>
<sequence>MSQPITRENFDEWMIPVYAPAPFIPVRGEGSRLWDQQGKEYIDFSGGIAVNALGHAHPELREALNEQASKFWHTGNGYTNEPVLRLAKKLIDATFADRVFFCNSGAEANEAALKLARKFAHDRYGSHKSGIVAFKNAFHGRTLFTVSAGGQPAYSQDFAPLPPDIRHAAYNDINSASALIDDATCAVIVEPIQGEGGVVPASNAFLQGLRELCDRHNALLIFDEVQTGVGRTGELYAYMHYGVTPDLLTTAKALGGGFPVGALLATKECASVMTVGTHGTTYGGNPLASAVAGKVLDLINTPEMLNGVKQRHDWFVERLNSINHHYSLFSEVRGLGLLIGCVLNADYAGQAKQISQEAVKAGVMVLIAGGNVVRFAPALNVSEEEVTTGLDRFSAACEHFVSRGSS</sequence>
<gene>
    <name evidence="1" type="primary">astC</name>
    <name evidence="1" type="synonym">argM</name>
    <name type="ordered locus">E2348C_1876</name>
</gene>
<protein>
    <recommendedName>
        <fullName evidence="1">Succinylornithine transaminase</fullName>
        <ecNumber evidence="1">2.6.1.81</ecNumber>
    </recommendedName>
    <alternativeName>
        <fullName evidence="1">Succinylornithine aminotransferase</fullName>
    </alternativeName>
</protein>
<evidence type="ECO:0000255" key="1">
    <source>
        <dbReference type="HAMAP-Rule" id="MF_01173"/>
    </source>
</evidence>
<keyword id="KW-0032">Aminotransferase</keyword>
<keyword id="KW-0056">Arginine metabolism</keyword>
<keyword id="KW-0663">Pyridoxal phosphate</keyword>
<keyword id="KW-1185">Reference proteome</keyword>
<keyword id="KW-0808">Transferase</keyword>
<feature type="chain" id="PRO_1000164374" description="Succinylornithine transaminase">
    <location>
        <begin position="1"/>
        <end position="406"/>
    </location>
</feature>
<feature type="modified residue" description="N6-(pyridoxal phosphate)lysine" evidence="1">
    <location>
        <position position="252"/>
    </location>
</feature>
<accession>B7USC9</accession>
<dbReference type="EC" id="2.6.1.81" evidence="1"/>
<dbReference type="EMBL" id="FM180568">
    <property type="protein sequence ID" value="CAS09424.1"/>
    <property type="molecule type" value="Genomic_DNA"/>
</dbReference>
<dbReference type="RefSeq" id="WP_000082028.1">
    <property type="nucleotide sequence ID" value="NC_011601.1"/>
</dbReference>
<dbReference type="SMR" id="B7USC9"/>
<dbReference type="KEGG" id="ecg:E2348C_1876"/>
<dbReference type="HOGENOM" id="CLU_016922_10_1_6"/>
<dbReference type="UniPathway" id="UPA00185">
    <property type="reaction ID" value="UER00281"/>
</dbReference>
<dbReference type="Proteomes" id="UP000008205">
    <property type="component" value="Chromosome"/>
</dbReference>
<dbReference type="GO" id="GO:0042802">
    <property type="term" value="F:identical protein binding"/>
    <property type="evidence" value="ECO:0007669"/>
    <property type="project" value="TreeGrafter"/>
</dbReference>
<dbReference type="GO" id="GO:0030170">
    <property type="term" value="F:pyridoxal phosphate binding"/>
    <property type="evidence" value="ECO:0007669"/>
    <property type="project" value="UniProtKB-UniRule"/>
</dbReference>
<dbReference type="GO" id="GO:0043825">
    <property type="term" value="F:succinylornithine transaminase activity"/>
    <property type="evidence" value="ECO:0007669"/>
    <property type="project" value="UniProtKB-EC"/>
</dbReference>
<dbReference type="GO" id="GO:1901607">
    <property type="term" value="P:alpha-amino acid biosynthetic process"/>
    <property type="evidence" value="ECO:0007669"/>
    <property type="project" value="UniProtKB-ARBA"/>
</dbReference>
<dbReference type="GO" id="GO:0019544">
    <property type="term" value="P:arginine catabolic process to glutamate"/>
    <property type="evidence" value="ECO:0007669"/>
    <property type="project" value="UniProtKB-UniRule"/>
</dbReference>
<dbReference type="GO" id="GO:0019545">
    <property type="term" value="P:arginine catabolic process to succinate"/>
    <property type="evidence" value="ECO:0007669"/>
    <property type="project" value="UniProtKB-UniRule"/>
</dbReference>
<dbReference type="GO" id="GO:0006593">
    <property type="term" value="P:ornithine catabolic process"/>
    <property type="evidence" value="ECO:0007669"/>
    <property type="project" value="InterPro"/>
</dbReference>
<dbReference type="CDD" id="cd00610">
    <property type="entry name" value="OAT_like"/>
    <property type="match status" value="1"/>
</dbReference>
<dbReference type="FunFam" id="3.40.640.10:FF:000004">
    <property type="entry name" value="Acetylornithine aminotransferase"/>
    <property type="match status" value="1"/>
</dbReference>
<dbReference type="FunFam" id="3.90.1150.10:FF:000009">
    <property type="entry name" value="Succinylornithine transaminase"/>
    <property type="match status" value="1"/>
</dbReference>
<dbReference type="Gene3D" id="3.90.1150.10">
    <property type="entry name" value="Aspartate Aminotransferase, domain 1"/>
    <property type="match status" value="1"/>
</dbReference>
<dbReference type="Gene3D" id="3.40.640.10">
    <property type="entry name" value="Type I PLP-dependent aspartate aminotransferase-like (Major domain)"/>
    <property type="match status" value="1"/>
</dbReference>
<dbReference type="HAMAP" id="MF_01107">
    <property type="entry name" value="ArgD_aminotrans_3"/>
    <property type="match status" value="1"/>
</dbReference>
<dbReference type="HAMAP" id="MF_01173">
    <property type="entry name" value="AstC_aminotrans_3"/>
    <property type="match status" value="1"/>
</dbReference>
<dbReference type="InterPro" id="IPR017652">
    <property type="entry name" value="Ac/SucOrn_transaminase_bac"/>
</dbReference>
<dbReference type="InterPro" id="IPR004636">
    <property type="entry name" value="AcOrn/SuccOrn_fam"/>
</dbReference>
<dbReference type="InterPro" id="IPR005814">
    <property type="entry name" value="Aminotrans_3"/>
</dbReference>
<dbReference type="InterPro" id="IPR049704">
    <property type="entry name" value="Aminotrans_3_PPA_site"/>
</dbReference>
<dbReference type="InterPro" id="IPR050103">
    <property type="entry name" value="Class-III_PLP-dep_AT"/>
</dbReference>
<dbReference type="InterPro" id="IPR015424">
    <property type="entry name" value="PyrdxlP-dep_Trfase"/>
</dbReference>
<dbReference type="InterPro" id="IPR015421">
    <property type="entry name" value="PyrdxlP-dep_Trfase_major"/>
</dbReference>
<dbReference type="InterPro" id="IPR015422">
    <property type="entry name" value="PyrdxlP-dep_Trfase_small"/>
</dbReference>
<dbReference type="InterPro" id="IPR026330">
    <property type="entry name" value="SOAT"/>
</dbReference>
<dbReference type="NCBIfam" id="TIGR03246">
    <property type="entry name" value="arg_catab_astC"/>
    <property type="match status" value="1"/>
</dbReference>
<dbReference type="NCBIfam" id="TIGR00707">
    <property type="entry name" value="argD"/>
    <property type="match status" value="1"/>
</dbReference>
<dbReference type="NCBIfam" id="NF002325">
    <property type="entry name" value="PRK01278.1"/>
    <property type="match status" value="1"/>
</dbReference>
<dbReference type="NCBIfam" id="NF003468">
    <property type="entry name" value="PRK05093.1"/>
    <property type="match status" value="1"/>
</dbReference>
<dbReference type="NCBIfam" id="NF009047">
    <property type="entry name" value="PRK12381.1"/>
    <property type="match status" value="1"/>
</dbReference>
<dbReference type="PANTHER" id="PTHR11986">
    <property type="entry name" value="AMINOTRANSFERASE CLASS III"/>
    <property type="match status" value="1"/>
</dbReference>
<dbReference type="PANTHER" id="PTHR11986:SF113">
    <property type="entry name" value="SUCCINYLORNITHINE TRANSAMINASE"/>
    <property type="match status" value="1"/>
</dbReference>
<dbReference type="Pfam" id="PF00202">
    <property type="entry name" value="Aminotran_3"/>
    <property type="match status" value="1"/>
</dbReference>
<dbReference type="PIRSF" id="PIRSF000521">
    <property type="entry name" value="Transaminase_4ab_Lys_Orn"/>
    <property type="match status" value="1"/>
</dbReference>
<dbReference type="SUPFAM" id="SSF53383">
    <property type="entry name" value="PLP-dependent transferases"/>
    <property type="match status" value="1"/>
</dbReference>
<dbReference type="PROSITE" id="PS00600">
    <property type="entry name" value="AA_TRANSFER_CLASS_3"/>
    <property type="match status" value="1"/>
</dbReference>
<reference key="1">
    <citation type="journal article" date="2009" name="J. Bacteriol.">
        <title>Complete genome sequence and comparative genome analysis of enteropathogenic Escherichia coli O127:H6 strain E2348/69.</title>
        <authorList>
            <person name="Iguchi A."/>
            <person name="Thomson N.R."/>
            <person name="Ogura Y."/>
            <person name="Saunders D."/>
            <person name="Ooka T."/>
            <person name="Henderson I.R."/>
            <person name="Harris D."/>
            <person name="Asadulghani M."/>
            <person name="Kurokawa K."/>
            <person name="Dean P."/>
            <person name="Kenny B."/>
            <person name="Quail M.A."/>
            <person name="Thurston S."/>
            <person name="Dougan G."/>
            <person name="Hayashi T."/>
            <person name="Parkhill J."/>
            <person name="Frankel G."/>
        </authorList>
    </citation>
    <scope>NUCLEOTIDE SEQUENCE [LARGE SCALE GENOMIC DNA]</scope>
    <source>
        <strain>E2348/69 / EPEC</strain>
    </source>
</reference>
<organism>
    <name type="scientific">Escherichia coli O127:H6 (strain E2348/69 / EPEC)</name>
    <dbReference type="NCBI Taxonomy" id="574521"/>
    <lineage>
        <taxon>Bacteria</taxon>
        <taxon>Pseudomonadati</taxon>
        <taxon>Pseudomonadota</taxon>
        <taxon>Gammaproteobacteria</taxon>
        <taxon>Enterobacterales</taxon>
        <taxon>Enterobacteriaceae</taxon>
        <taxon>Escherichia</taxon>
    </lineage>
</organism>
<name>ASTC_ECO27</name>